<gene>
    <name evidence="1" type="primary">rsmA</name>
    <name evidence="1" type="synonym">ksgA</name>
    <name type="ordered locus">YPN_0366</name>
    <name type="ORF">YP516_0374</name>
</gene>
<evidence type="ECO:0000255" key="1">
    <source>
        <dbReference type="HAMAP-Rule" id="MF_00607"/>
    </source>
</evidence>
<accession>Q1CMT2</accession>
<accession>C4GNR8</accession>
<proteinExistence type="inferred from homology"/>
<name>RSMA_YERPN</name>
<protein>
    <recommendedName>
        <fullName evidence="1">Ribosomal RNA small subunit methyltransferase A</fullName>
        <ecNumber evidence="1">2.1.1.182</ecNumber>
    </recommendedName>
    <alternativeName>
        <fullName evidence="1">16S rRNA (adenine(1518)-N(6)/adenine(1519)-N(6))-dimethyltransferase</fullName>
    </alternativeName>
    <alternativeName>
        <fullName evidence="1">16S rRNA dimethyladenosine transferase</fullName>
    </alternativeName>
    <alternativeName>
        <fullName evidence="1">16S rRNA dimethylase</fullName>
    </alternativeName>
    <alternativeName>
        <fullName evidence="1">S-adenosylmethionine-6-N', N'-adenosyl(rRNA) dimethyltransferase</fullName>
    </alternativeName>
</protein>
<organism>
    <name type="scientific">Yersinia pestis bv. Antiqua (strain Nepal516)</name>
    <dbReference type="NCBI Taxonomy" id="377628"/>
    <lineage>
        <taxon>Bacteria</taxon>
        <taxon>Pseudomonadati</taxon>
        <taxon>Pseudomonadota</taxon>
        <taxon>Gammaproteobacteria</taxon>
        <taxon>Enterobacterales</taxon>
        <taxon>Yersiniaceae</taxon>
        <taxon>Yersinia</taxon>
    </lineage>
</organism>
<feature type="chain" id="PRO_0000257377" description="Ribosomal RNA small subunit methyltransferase A">
    <location>
        <begin position="1"/>
        <end position="272"/>
    </location>
</feature>
<feature type="binding site" evidence="1">
    <location>
        <position position="18"/>
    </location>
    <ligand>
        <name>S-adenosyl-L-methionine</name>
        <dbReference type="ChEBI" id="CHEBI:59789"/>
    </ligand>
</feature>
<feature type="binding site" evidence="1">
    <location>
        <position position="20"/>
    </location>
    <ligand>
        <name>S-adenosyl-L-methionine</name>
        <dbReference type="ChEBI" id="CHEBI:59789"/>
    </ligand>
</feature>
<feature type="binding site" evidence="1">
    <location>
        <position position="45"/>
    </location>
    <ligand>
        <name>S-adenosyl-L-methionine</name>
        <dbReference type="ChEBI" id="CHEBI:59789"/>
    </ligand>
</feature>
<feature type="binding site" evidence="1">
    <location>
        <position position="66"/>
    </location>
    <ligand>
        <name>S-adenosyl-L-methionine</name>
        <dbReference type="ChEBI" id="CHEBI:59789"/>
    </ligand>
</feature>
<feature type="binding site" evidence="1">
    <location>
        <position position="91"/>
    </location>
    <ligand>
        <name>S-adenosyl-L-methionine</name>
        <dbReference type="ChEBI" id="CHEBI:59789"/>
    </ligand>
</feature>
<feature type="binding site" evidence="1">
    <location>
        <position position="113"/>
    </location>
    <ligand>
        <name>S-adenosyl-L-methionine</name>
        <dbReference type="ChEBI" id="CHEBI:59789"/>
    </ligand>
</feature>
<comment type="function">
    <text evidence="1">Specifically dimethylates two adjacent adenosines (A1518 and A1519) in the loop of a conserved hairpin near the 3'-end of 16S rRNA in the 30S particle. May play a critical role in biogenesis of 30S subunits.</text>
</comment>
<comment type="catalytic activity">
    <reaction evidence="1">
        <text>adenosine(1518)/adenosine(1519) in 16S rRNA + 4 S-adenosyl-L-methionine = N(6)-dimethyladenosine(1518)/N(6)-dimethyladenosine(1519) in 16S rRNA + 4 S-adenosyl-L-homocysteine + 4 H(+)</text>
        <dbReference type="Rhea" id="RHEA:19609"/>
        <dbReference type="Rhea" id="RHEA-COMP:10232"/>
        <dbReference type="Rhea" id="RHEA-COMP:10233"/>
        <dbReference type="ChEBI" id="CHEBI:15378"/>
        <dbReference type="ChEBI" id="CHEBI:57856"/>
        <dbReference type="ChEBI" id="CHEBI:59789"/>
        <dbReference type="ChEBI" id="CHEBI:74411"/>
        <dbReference type="ChEBI" id="CHEBI:74493"/>
        <dbReference type="EC" id="2.1.1.182"/>
    </reaction>
</comment>
<comment type="subcellular location">
    <subcellularLocation>
        <location evidence="1">Cytoplasm</location>
    </subcellularLocation>
</comment>
<comment type="similarity">
    <text evidence="1">Belongs to the class I-like SAM-binding methyltransferase superfamily. rRNA adenine N(6)-methyltransferase family. RsmA subfamily.</text>
</comment>
<keyword id="KW-0963">Cytoplasm</keyword>
<keyword id="KW-0489">Methyltransferase</keyword>
<keyword id="KW-0694">RNA-binding</keyword>
<keyword id="KW-0698">rRNA processing</keyword>
<keyword id="KW-0949">S-adenosyl-L-methionine</keyword>
<keyword id="KW-0808">Transferase</keyword>
<dbReference type="EC" id="2.1.1.182" evidence="1"/>
<dbReference type="EMBL" id="CP000305">
    <property type="protein sequence ID" value="ABG16698.1"/>
    <property type="molecule type" value="Genomic_DNA"/>
</dbReference>
<dbReference type="EMBL" id="ACNQ01000006">
    <property type="protein sequence ID" value="EEO78150.1"/>
    <property type="molecule type" value="Genomic_DNA"/>
</dbReference>
<dbReference type="RefSeq" id="WP_002210490.1">
    <property type="nucleotide sequence ID" value="NZ_ACNQ01000006.1"/>
</dbReference>
<dbReference type="SMR" id="Q1CMT2"/>
<dbReference type="GeneID" id="57974118"/>
<dbReference type="KEGG" id="ypn:YPN_0366"/>
<dbReference type="HOGENOM" id="CLU_041220_0_1_6"/>
<dbReference type="Proteomes" id="UP000008936">
    <property type="component" value="Chromosome"/>
</dbReference>
<dbReference type="GO" id="GO:0005829">
    <property type="term" value="C:cytosol"/>
    <property type="evidence" value="ECO:0007669"/>
    <property type="project" value="TreeGrafter"/>
</dbReference>
<dbReference type="GO" id="GO:0052908">
    <property type="term" value="F:16S rRNA (adenine(1518)-N(6)/adenine(1519)-N(6))-dimethyltransferase activity"/>
    <property type="evidence" value="ECO:0007669"/>
    <property type="project" value="UniProtKB-EC"/>
</dbReference>
<dbReference type="GO" id="GO:0003723">
    <property type="term" value="F:RNA binding"/>
    <property type="evidence" value="ECO:0007669"/>
    <property type="project" value="UniProtKB-KW"/>
</dbReference>
<dbReference type="CDD" id="cd02440">
    <property type="entry name" value="AdoMet_MTases"/>
    <property type="match status" value="1"/>
</dbReference>
<dbReference type="FunFam" id="1.10.8.100:FF:000001">
    <property type="entry name" value="Ribosomal RNA small subunit methyltransferase A"/>
    <property type="match status" value="1"/>
</dbReference>
<dbReference type="FunFam" id="3.40.50.150:FF:000006">
    <property type="entry name" value="Ribosomal RNA small subunit methyltransferase A"/>
    <property type="match status" value="1"/>
</dbReference>
<dbReference type="Gene3D" id="1.10.8.100">
    <property type="entry name" value="Ribosomal RNA adenine dimethylase-like, domain 2"/>
    <property type="match status" value="1"/>
</dbReference>
<dbReference type="Gene3D" id="3.40.50.150">
    <property type="entry name" value="Vaccinia Virus protein VP39"/>
    <property type="match status" value="1"/>
</dbReference>
<dbReference type="HAMAP" id="MF_00607">
    <property type="entry name" value="16SrRNA_methyltr_A"/>
    <property type="match status" value="1"/>
</dbReference>
<dbReference type="InterPro" id="IPR001737">
    <property type="entry name" value="KsgA/Erm"/>
</dbReference>
<dbReference type="InterPro" id="IPR023165">
    <property type="entry name" value="rRNA_Ade_diMease-like_C"/>
</dbReference>
<dbReference type="InterPro" id="IPR020596">
    <property type="entry name" value="rRNA_Ade_Mease_Trfase_CS"/>
</dbReference>
<dbReference type="InterPro" id="IPR020598">
    <property type="entry name" value="rRNA_Ade_methylase_Trfase_N"/>
</dbReference>
<dbReference type="InterPro" id="IPR011530">
    <property type="entry name" value="rRNA_adenine_dimethylase"/>
</dbReference>
<dbReference type="InterPro" id="IPR029063">
    <property type="entry name" value="SAM-dependent_MTases_sf"/>
</dbReference>
<dbReference type="NCBIfam" id="TIGR00755">
    <property type="entry name" value="ksgA"/>
    <property type="match status" value="1"/>
</dbReference>
<dbReference type="PANTHER" id="PTHR11727">
    <property type="entry name" value="DIMETHYLADENOSINE TRANSFERASE"/>
    <property type="match status" value="1"/>
</dbReference>
<dbReference type="PANTHER" id="PTHR11727:SF7">
    <property type="entry name" value="DIMETHYLADENOSINE TRANSFERASE-RELATED"/>
    <property type="match status" value="1"/>
</dbReference>
<dbReference type="Pfam" id="PF00398">
    <property type="entry name" value="RrnaAD"/>
    <property type="match status" value="1"/>
</dbReference>
<dbReference type="SMART" id="SM00650">
    <property type="entry name" value="rADc"/>
    <property type="match status" value="1"/>
</dbReference>
<dbReference type="SUPFAM" id="SSF53335">
    <property type="entry name" value="S-adenosyl-L-methionine-dependent methyltransferases"/>
    <property type="match status" value="1"/>
</dbReference>
<dbReference type="PROSITE" id="PS01131">
    <property type="entry name" value="RRNA_A_DIMETH"/>
    <property type="match status" value="1"/>
</dbReference>
<dbReference type="PROSITE" id="PS51689">
    <property type="entry name" value="SAM_RNA_A_N6_MT"/>
    <property type="match status" value="1"/>
</dbReference>
<reference key="1">
    <citation type="journal article" date="2006" name="J. Bacteriol.">
        <title>Complete genome sequence of Yersinia pestis strains Antiqua and Nepal516: evidence of gene reduction in an emerging pathogen.</title>
        <authorList>
            <person name="Chain P.S.G."/>
            <person name="Hu P."/>
            <person name="Malfatti S.A."/>
            <person name="Radnedge L."/>
            <person name="Larimer F."/>
            <person name="Vergez L.M."/>
            <person name="Worsham P."/>
            <person name="Chu M.C."/>
            <person name="Andersen G.L."/>
        </authorList>
    </citation>
    <scope>NUCLEOTIDE SEQUENCE [LARGE SCALE GENOMIC DNA]</scope>
    <source>
        <strain>Nepal516</strain>
    </source>
</reference>
<reference key="2">
    <citation type="submission" date="2009-04" db="EMBL/GenBank/DDBJ databases">
        <title>Yersinia pestis Nepal516A whole genome shotgun sequencing project.</title>
        <authorList>
            <person name="Plunkett G. III"/>
            <person name="Anderson B.D."/>
            <person name="Baumler D.J."/>
            <person name="Burland V."/>
            <person name="Cabot E.L."/>
            <person name="Glasner J.D."/>
            <person name="Mau B."/>
            <person name="Neeno-Eckwall E."/>
            <person name="Perna N.T."/>
            <person name="Munk A.C."/>
            <person name="Tapia R."/>
            <person name="Green L.D."/>
            <person name="Rogers Y.C."/>
            <person name="Detter J.C."/>
            <person name="Bruce D.C."/>
            <person name="Brettin T.S."/>
        </authorList>
    </citation>
    <scope>NUCLEOTIDE SEQUENCE [LARGE SCALE GENOMIC DNA]</scope>
    <source>
        <strain>Nepal516</strain>
    </source>
</reference>
<sequence length="272" mass="30458">MNNRVHQGHFARKRFGQNFLNDQFVIDSIVSAIHPVPGEAVVEIGPGLGALTEPVAARMDHMTVIELDRDLAARLASHPQLKDKLTIHQQDAMKVNFSELSEQAGQPLRVFGNLPYNISTPLMFHLFSYTDAIRDMHFMLQKEVVNRLVAGPNSKTYGRLTVMAQYYCNVIPVLEVPPTAFTPAPKVDSAVVRLIPHVQMPHPVGDVRMLSRITTQAFNQRRKTVRNSLGDLFTSEQLIELGIDPILRAENISVAQYCKLANWLSAQSTPQK</sequence>